<accession>Q39CT5</accession>
<keyword id="KW-0067">ATP-binding</keyword>
<keyword id="KW-0173">Coenzyme A biosynthesis</keyword>
<keyword id="KW-0963">Cytoplasm</keyword>
<keyword id="KW-0460">Magnesium</keyword>
<keyword id="KW-0547">Nucleotide-binding</keyword>
<keyword id="KW-0548">Nucleotidyltransferase</keyword>
<keyword id="KW-0808">Transferase</keyword>
<gene>
    <name evidence="1" type="primary">coaD</name>
    <name type="ordered locus">Bcep18194_A6137</name>
</gene>
<dbReference type="EC" id="2.7.7.3" evidence="1"/>
<dbReference type="EMBL" id="CP000151">
    <property type="protein sequence ID" value="ABB09731.1"/>
    <property type="molecule type" value="Genomic_DNA"/>
</dbReference>
<dbReference type="RefSeq" id="WP_011353239.1">
    <property type="nucleotide sequence ID" value="NC_007510.1"/>
</dbReference>
<dbReference type="SMR" id="Q39CT5"/>
<dbReference type="GeneID" id="45096019"/>
<dbReference type="KEGG" id="bur:Bcep18194_A6137"/>
<dbReference type="PATRIC" id="fig|482957.22.peg.3142"/>
<dbReference type="HOGENOM" id="CLU_100149_0_1_4"/>
<dbReference type="UniPathway" id="UPA00241">
    <property type="reaction ID" value="UER00355"/>
</dbReference>
<dbReference type="Proteomes" id="UP000002705">
    <property type="component" value="Chromosome 1"/>
</dbReference>
<dbReference type="GO" id="GO:0005737">
    <property type="term" value="C:cytoplasm"/>
    <property type="evidence" value="ECO:0007669"/>
    <property type="project" value="UniProtKB-SubCell"/>
</dbReference>
<dbReference type="GO" id="GO:0005524">
    <property type="term" value="F:ATP binding"/>
    <property type="evidence" value="ECO:0007669"/>
    <property type="project" value="UniProtKB-KW"/>
</dbReference>
<dbReference type="GO" id="GO:0004595">
    <property type="term" value="F:pantetheine-phosphate adenylyltransferase activity"/>
    <property type="evidence" value="ECO:0007669"/>
    <property type="project" value="UniProtKB-UniRule"/>
</dbReference>
<dbReference type="GO" id="GO:0015937">
    <property type="term" value="P:coenzyme A biosynthetic process"/>
    <property type="evidence" value="ECO:0007669"/>
    <property type="project" value="UniProtKB-UniRule"/>
</dbReference>
<dbReference type="CDD" id="cd02163">
    <property type="entry name" value="PPAT"/>
    <property type="match status" value="1"/>
</dbReference>
<dbReference type="Gene3D" id="3.40.50.620">
    <property type="entry name" value="HUPs"/>
    <property type="match status" value="1"/>
</dbReference>
<dbReference type="HAMAP" id="MF_00151">
    <property type="entry name" value="PPAT_bact"/>
    <property type="match status" value="1"/>
</dbReference>
<dbReference type="InterPro" id="IPR004821">
    <property type="entry name" value="Cyt_trans-like"/>
</dbReference>
<dbReference type="InterPro" id="IPR001980">
    <property type="entry name" value="PPAT"/>
</dbReference>
<dbReference type="InterPro" id="IPR014729">
    <property type="entry name" value="Rossmann-like_a/b/a_fold"/>
</dbReference>
<dbReference type="NCBIfam" id="TIGR01510">
    <property type="entry name" value="coaD_prev_kdtB"/>
    <property type="match status" value="1"/>
</dbReference>
<dbReference type="NCBIfam" id="TIGR00125">
    <property type="entry name" value="cyt_tran_rel"/>
    <property type="match status" value="1"/>
</dbReference>
<dbReference type="PANTHER" id="PTHR21342">
    <property type="entry name" value="PHOSPHOPANTETHEINE ADENYLYLTRANSFERASE"/>
    <property type="match status" value="1"/>
</dbReference>
<dbReference type="PANTHER" id="PTHR21342:SF1">
    <property type="entry name" value="PHOSPHOPANTETHEINE ADENYLYLTRANSFERASE"/>
    <property type="match status" value="1"/>
</dbReference>
<dbReference type="Pfam" id="PF01467">
    <property type="entry name" value="CTP_transf_like"/>
    <property type="match status" value="1"/>
</dbReference>
<dbReference type="PRINTS" id="PR01020">
    <property type="entry name" value="LPSBIOSNTHSS"/>
</dbReference>
<dbReference type="SUPFAM" id="SSF52374">
    <property type="entry name" value="Nucleotidylyl transferase"/>
    <property type="match status" value="1"/>
</dbReference>
<feature type="chain" id="PRO_1000011112" description="Phosphopantetheine adenylyltransferase">
    <location>
        <begin position="1"/>
        <end position="165"/>
    </location>
</feature>
<feature type="binding site" evidence="1">
    <location>
        <begin position="9"/>
        <end position="10"/>
    </location>
    <ligand>
        <name>ATP</name>
        <dbReference type="ChEBI" id="CHEBI:30616"/>
    </ligand>
</feature>
<feature type="binding site" evidence="1">
    <location>
        <position position="9"/>
    </location>
    <ligand>
        <name>substrate</name>
    </ligand>
</feature>
<feature type="binding site" evidence="1">
    <location>
        <position position="17"/>
    </location>
    <ligand>
        <name>ATP</name>
        <dbReference type="ChEBI" id="CHEBI:30616"/>
    </ligand>
</feature>
<feature type="binding site" evidence="1">
    <location>
        <position position="41"/>
    </location>
    <ligand>
        <name>substrate</name>
    </ligand>
</feature>
<feature type="binding site" evidence="1">
    <location>
        <position position="73"/>
    </location>
    <ligand>
        <name>substrate</name>
    </ligand>
</feature>
<feature type="binding site" evidence="1">
    <location>
        <position position="87"/>
    </location>
    <ligand>
        <name>substrate</name>
    </ligand>
</feature>
<feature type="binding site" evidence="1">
    <location>
        <begin position="88"/>
        <end position="90"/>
    </location>
    <ligand>
        <name>ATP</name>
        <dbReference type="ChEBI" id="CHEBI:30616"/>
    </ligand>
</feature>
<feature type="binding site" evidence="1">
    <location>
        <position position="98"/>
    </location>
    <ligand>
        <name>ATP</name>
        <dbReference type="ChEBI" id="CHEBI:30616"/>
    </ligand>
</feature>
<feature type="binding site" evidence="1">
    <location>
        <begin position="123"/>
        <end position="129"/>
    </location>
    <ligand>
        <name>ATP</name>
        <dbReference type="ChEBI" id="CHEBI:30616"/>
    </ligand>
</feature>
<feature type="site" description="Transition state stabilizer" evidence="1">
    <location>
        <position position="17"/>
    </location>
</feature>
<protein>
    <recommendedName>
        <fullName evidence="1">Phosphopantetheine adenylyltransferase</fullName>
        <ecNumber evidence="1">2.7.7.3</ecNumber>
    </recommendedName>
    <alternativeName>
        <fullName evidence="1">Dephospho-CoA pyrophosphorylase</fullName>
    </alternativeName>
    <alternativeName>
        <fullName evidence="1">Pantetheine-phosphate adenylyltransferase</fullName>
        <shortName evidence="1">PPAT</shortName>
    </alternativeName>
</protein>
<comment type="function">
    <text evidence="1">Reversibly transfers an adenylyl group from ATP to 4'-phosphopantetheine, yielding dephospho-CoA (dPCoA) and pyrophosphate.</text>
</comment>
<comment type="catalytic activity">
    <reaction evidence="1">
        <text>(R)-4'-phosphopantetheine + ATP + H(+) = 3'-dephospho-CoA + diphosphate</text>
        <dbReference type="Rhea" id="RHEA:19801"/>
        <dbReference type="ChEBI" id="CHEBI:15378"/>
        <dbReference type="ChEBI" id="CHEBI:30616"/>
        <dbReference type="ChEBI" id="CHEBI:33019"/>
        <dbReference type="ChEBI" id="CHEBI:57328"/>
        <dbReference type="ChEBI" id="CHEBI:61723"/>
        <dbReference type="EC" id="2.7.7.3"/>
    </reaction>
</comment>
<comment type="cofactor">
    <cofactor evidence="1">
        <name>Mg(2+)</name>
        <dbReference type="ChEBI" id="CHEBI:18420"/>
    </cofactor>
</comment>
<comment type="pathway">
    <text evidence="1">Cofactor biosynthesis; coenzyme A biosynthesis; CoA from (R)-pantothenate: step 4/5.</text>
</comment>
<comment type="subunit">
    <text evidence="1">Homohexamer.</text>
</comment>
<comment type="subcellular location">
    <subcellularLocation>
        <location evidence="1">Cytoplasm</location>
    </subcellularLocation>
</comment>
<comment type="similarity">
    <text evidence="1">Belongs to the bacterial CoaD family.</text>
</comment>
<evidence type="ECO:0000255" key="1">
    <source>
        <dbReference type="HAMAP-Rule" id="MF_00151"/>
    </source>
</evidence>
<name>COAD_BURL3</name>
<organism>
    <name type="scientific">Burkholderia lata (strain ATCC 17760 / DSM 23089 / LMG 22485 / NCIMB 9086 / R18194 / 383)</name>
    <dbReference type="NCBI Taxonomy" id="482957"/>
    <lineage>
        <taxon>Bacteria</taxon>
        <taxon>Pseudomonadati</taxon>
        <taxon>Pseudomonadota</taxon>
        <taxon>Betaproteobacteria</taxon>
        <taxon>Burkholderiales</taxon>
        <taxon>Burkholderiaceae</taxon>
        <taxon>Burkholderia</taxon>
        <taxon>Burkholderia cepacia complex</taxon>
    </lineage>
</organism>
<sequence length="165" mass="18432">MVVAVYPGTFDPLTRGHEDLVRRASSIFDTLVVGVADSRAKKPFFSLEERLTIANEVLGHYPNVKVMSFTGLLKDFVRTNNARVIVRGLRAVSDFEYEFQMAGMNRYLLPDVETMFMTPSDQYQFISGTIVREIAQLGGDVSKFVFPSVEKWLTEKVAAMGGPVA</sequence>
<reference key="1">
    <citation type="submission" date="2005-10" db="EMBL/GenBank/DDBJ databases">
        <title>Complete sequence of chromosome 1 of Burkholderia sp. 383.</title>
        <authorList>
            <consortium name="US DOE Joint Genome Institute"/>
            <person name="Copeland A."/>
            <person name="Lucas S."/>
            <person name="Lapidus A."/>
            <person name="Barry K."/>
            <person name="Detter J.C."/>
            <person name="Glavina T."/>
            <person name="Hammon N."/>
            <person name="Israni S."/>
            <person name="Pitluck S."/>
            <person name="Chain P."/>
            <person name="Malfatti S."/>
            <person name="Shin M."/>
            <person name="Vergez L."/>
            <person name="Schmutz J."/>
            <person name="Larimer F."/>
            <person name="Land M."/>
            <person name="Kyrpides N."/>
            <person name="Lykidis A."/>
            <person name="Richardson P."/>
        </authorList>
    </citation>
    <scope>NUCLEOTIDE SEQUENCE [LARGE SCALE GENOMIC DNA]</scope>
    <source>
        <strain>ATCC 17760 / DSM 23089 / LMG 22485 / NCIMB 9086 / R18194 / 383</strain>
    </source>
</reference>
<proteinExistence type="inferred from homology"/>